<dbReference type="EC" id="3.1.1.96" evidence="1"/>
<dbReference type="EMBL" id="AE014299">
    <property type="protein sequence ID" value="AAN57365.1"/>
    <property type="molecule type" value="Genomic_DNA"/>
</dbReference>
<dbReference type="RefSeq" id="NP_719921.1">
    <property type="nucleotide sequence ID" value="NC_004347.2"/>
</dbReference>
<dbReference type="RefSeq" id="WP_011074047.1">
    <property type="nucleotide sequence ID" value="NC_004347.2"/>
</dbReference>
<dbReference type="SMR" id="Q8E988"/>
<dbReference type="STRING" id="211586.SO_4398"/>
<dbReference type="PaxDb" id="211586-SO_4398"/>
<dbReference type="KEGG" id="son:SO_4398"/>
<dbReference type="PATRIC" id="fig|211586.12.peg.4261"/>
<dbReference type="eggNOG" id="COG1490">
    <property type="taxonomic scope" value="Bacteria"/>
</dbReference>
<dbReference type="HOGENOM" id="CLU_076901_1_0_6"/>
<dbReference type="OrthoDB" id="9801395at2"/>
<dbReference type="PhylomeDB" id="Q8E988"/>
<dbReference type="BioCyc" id="SONE211586:G1GMP-4068-MONOMER"/>
<dbReference type="Proteomes" id="UP000008186">
    <property type="component" value="Chromosome"/>
</dbReference>
<dbReference type="GO" id="GO:0005737">
    <property type="term" value="C:cytoplasm"/>
    <property type="evidence" value="ECO:0000318"/>
    <property type="project" value="GO_Central"/>
</dbReference>
<dbReference type="GO" id="GO:0051500">
    <property type="term" value="F:D-tyrosyl-tRNA(Tyr) deacylase activity"/>
    <property type="evidence" value="ECO:0000318"/>
    <property type="project" value="GO_Central"/>
</dbReference>
<dbReference type="GO" id="GO:0106026">
    <property type="term" value="F:Gly-tRNA(Ala) deacylase activity"/>
    <property type="evidence" value="ECO:0007669"/>
    <property type="project" value="UniProtKB-UniRule"/>
</dbReference>
<dbReference type="GO" id="GO:0043908">
    <property type="term" value="F:Ser(Gly)-tRNA(Ala) hydrolase activity"/>
    <property type="evidence" value="ECO:0007669"/>
    <property type="project" value="UniProtKB-UniRule"/>
</dbReference>
<dbReference type="GO" id="GO:0000049">
    <property type="term" value="F:tRNA binding"/>
    <property type="evidence" value="ECO:0007669"/>
    <property type="project" value="UniProtKB-UniRule"/>
</dbReference>
<dbReference type="GO" id="GO:0019478">
    <property type="term" value="P:D-amino acid catabolic process"/>
    <property type="evidence" value="ECO:0007669"/>
    <property type="project" value="UniProtKB-UniRule"/>
</dbReference>
<dbReference type="GO" id="GO:0006399">
    <property type="term" value="P:tRNA metabolic process"/>
    <property type="evidence" value="ECO:0000318"/>
    <property type="project" value="GO_Central"/>
</dbReference>
<dbReference type="CDD" id="cd00563">
    <property type="entry name" value="Dtyr_deacylase"/>
    <property type="match status" value="1"/>
</dbReference>
<dbReference type="FunFam" id="3.50.80.10:FF:000001">
    <property type="entry name" value="D-aminoacyl-tRNA deacylase"/>
    <property type="match status" value="1"/>
</dbReference>
<dbReference type="Gene3D" id="3.50.80.10">
    <property type="entry name" value="D-tyrosyl-tRNA(Tyr) deacylase"/>
    <property type="match status" value="1"/>
</dbReference>
<dbReference type="HAMAP" id="MF_00518">
    <property type="entry name" value="Deacylase_Dtd"/>
    <property type="match status" value="1"/>
</dbReference>
<dbReference type="InterPro" id="IPR003732">
    <property type="entry name" value="Daa-tRNA_deacyls_DTD"/>
</dbReference>
<dbReference type="InterPro" id="IPR023509">
    <property type="entry name" value="DTD-like_sf"/>
</dbReference>
<dbReference type="NCBIfam" id="TIGR00256">
    <property type="entry name" value="D-aminoacyl-tRNA deacylase"/>
    <property type="match status" value="1"/>
</dbReference>
<dbReference type="PANTHER" id="PTHR10472:SF5">
    <property type="entry name" value="D-AMINOACYL-TRNA DEACYLASE 1"/>
    <property type="match status" value="1"/>
</dbReference>
<dbReference type="PANTHER" id="PTHR10472">
    <property type="entry name" value="D-TYROSYL-TRNA TYR DEACYLASE"/>
    <property type="match status" value="1"/>
</dbReference>
<dbReference type="Pfam" id="PF02580">
    <property type="entry name" value="Tyr_Deacylase"/>
    <property type="match status" value="1"/>
</dbReference>
<dbReference type="SUPFAM" id="SSF69500">
    <property type="entry name" value="DTD-like"/>
    <property type="match status" value="1"/>
</dbReference>
<gene>
    <name evidence="1" type="primary">dtd</name>
    <name type="ordered locus">SO_4398</name>
</gene>
<accession>Q8E988</accession>
<protein>
    <recommendedName>
        <fullName evidence="1">D-aminoacyl-tRNA deacylase</fullName>
        <shortName evidence="1">DTD</shortName>
        <ecNumber evidence="1">3.1.1.96</ecNumber>
    </recommendedName>
    <alternativeName>
        <fullName evidence="1">Gly-tRNA(Ala) deacylase</fullName>
    </alternativeName>
</protein>
<name>DTD_SHEON</name>
<proteinExistence type="inferred from homology"/>
<feature type="chain" id="PRO_0000164582" description="D-aminoacyl-tRNA deacylase">
    <location>
        <begin position="1"/>
        <end position="145"/>
    </location>
</feature>
<feature type="short sequence motif" description="Gly-cisPro motif, important for rejection of L-amino acids" evidence="1">
    <location>
        <begin position="137"/>
        <end position="138"/>
    </location>
</feature>
<keyword id="KW-0963">Cytoplasm</keyword>
<keyword id="KW-0378">Hydrolase</keyword>
<keyword id="KW-1185">Reference proteome</keyword>
<keyword id="KW-0694">RNA-binding</keyword>
<keyword id="KW-0820">tRNA-binding</keyword>
<organism>
    <name type="scientific">Shewanella oneidensis (strain ATCC 700550 / JCM 31522 / CIP 106686 / LMG 19005 / NCIMB 14063 / MR-1)</name>
    <dbReference type="NCBI Taxonomy" id="211586"/>
    <lineage>
        <taxon>Bacteria</taxon>
        <taxon>Pseudomonadati</taxon>
        <taxon>Pseudomonadota</taxon>
        <taxon>Gammaproteobacteria</taxon>
        <taxon>Alteromonadales</taxon>
        <taxon>Shewanellaceae</taxon>
        <taxon>Shewanella</taxon>
    </lineage>
</organism>
<evidence type="ECO:0000255" key="1">
    <source>
        <dbReference type="HAMAP-Rule" id="MF_00518"/>
    </source>
</evidence>
<comment type="function">
    <text evidence="1">An aminoacyl-tRNA editing enzyme that deacylates mischarged D-aminoacyl-tRNAs. Also deacylates mischarged glycyl-tRNA(Ala), protecting cells against glycine mischarging by AlaRS. Acts via tRNA-based rather than protein-based catalysis; rejects L-amino acids rather than detecting D-amino acids in the active site. By recycling D-aminoacyl-tRNA to D-amino acids and free tRNA molecules, this enzyme counteracts the toxicity associated with the formation of D-aminoacyl-tRNA entities in vivo and helps enforce protein L-homochirality.</text>
</comment>
<comment type="catalytic activity">
    <reaction evidence="1">
        <text>glycyl-tRNA(Ala) + H2O = tRNA(Ala) + glycine + H(+)</text>
        <dbReference type="Rhea" id="RHEA:53744"/>
        <dbReference type="Rhea" id="RHEA-COMP:9657"/>
        <dbReference type="Rhea" id="RHEA-COMP:13640"/>
        <dbReference type="ChEBI" id="CHEBI:15377"/>
        <dbReference type="ChEBI" id="CHEBI:15378"/>
        <dbReference type="ChEBI" id="CHEBI:57305"/>
        <dbReference type="ChEBI" id="CHEBI:78442"/>
        <dbReference type="ChEBI" id="CHEBI:78522"/>
        <dbReference type="EC" id="3.1.1.96"/>
    </reaction>
</comment>
<comment type="catalytic activity">
    <reaction evidence="1">
        <text>a D-aminoacyl-tRNA + H2O = a tRNA + a D-alpha-amino acid + H(+)</text>
        <dbReference type="Rhea" id="RHEA:13953"/>
        <dbReference type="Rhea" id="RHEA-COMP:10123"/>
        <dbReference type="Rhea" id="RHEA-COMP:10124"/>
        <dbReference type="ChEBI" id="CHEBI:15377"/>
        <dbReference type="ChEBI" id="CHEBI:15378"/>
        <dbReference type="ChEBI" id="CHEBI:59871"/>
        <dbReference type="ChEBI" id="CHEBI:78442"/>
        <dbReference type="ChEBI" id="CHEBI:79333"/>
        <dbReference type="EC" id="3.1.1.96"/>
    </reaction>
</comment>
<comment type="subunit">
    <text evidence="1">Homodimer.</text>
</comment>
<comment type="subcellular location">
    <subcellularLocation>
        <location evidence="1">Cytoplasm</location>
    </subcellularLocation>
</comment>
<comment type="domain">
    <text evidence="1">A Gly-cisPro motif from one monomer fits into the active site of the other monomer to allow specific chiral rejection of L-amino acids.</text>
</comment>
<comment type="similarity">
    <text evidence="1">Belongs to the DTD family.</text>
</comment>
<sequence length="145" mass="15782">MIALIQRVSRASVVVDNQTIGAIDKGLLVLLGVEREDNREKMEKLATKVMSYRVFSDENGKMNLNLTQAGGSLLVVSQFTLAADTERGLRPSFSGAGTPEQALGLYEEFVAFCRTKGVNTETGQFAADMKVELVNDGPVTFHLQV</sequence>
<reference key="1">
    <citation type="journal article" date="2002" name="Nat. Biotechnol.">
        <title>Genome sequence of the dissimilatory metal ion-reducing bacterium Shewanella oneidensis.</title>
        <authorList>
            <person name="Heidelberg J.F."/>
            <person name="Paulsen I.T."/>
            <person name="Nelson K.E."/>
            <person name="Gaidos E.J."/>
            <person name="Nelson W.C."/>
            <person name="Read T.D."/>
            <person name="Eisen J.A."/>
            <person name="Seshadri R."/>
            <person name="Ward N.L."/>
            <person name="Methe B.A."/>
            <person name="Clayton R.A."/>
            <person name="Meyer T."/>
            <person name="Tsapin A."/>
            <person name="Scott J."/>
            <person name="Beanan M.J."/>
            <person name="Brinkac L.M."/>
            <person name="Daugherty S.C."/>
            <person name="DeBoy R.T."/>
            <person name="Dodson R.J."/>
            <person name="Durkin A.S."/>
            <person name="Haft D.H."/>
            <person name="Kolonay J.F."/>
            <person name="Madupu R."/>
            <person name="Peterson J.D."/>
            <person name="Umayam L.A."/>
            <person name="White O."/>
            <person name="Wolf A.M."/>
            <person name="Vamathevan J.J."/>
            <person name="Weidman J.F."/>
            <person name="Impraim M."/>
            <person name="Lee K."/>
            <person name="Berry K.J."/>
            <person name="Lee C."/>
            <person name="Mueller J."/>
            <person name="Khouri H.M."/>
            <person name="Gill J."/>
            <person name="Utterback T.R."/>
            <person name="McDonald L.A."/>
            <person name="Feldblyum T.V."/>
            <person name="Smith H.O."/>
            <person name="Venter J.C."/>
            <person name="Nealson K.H."/>
            <person name="Fraser C.M."/>
        </authorList>
    </citation>
    <scope>NUCLEOTIDE SEQUENCE [LARGE SCALE GENOMIC DNA]</scope>
    <source>
        <strain>ATCC 700550 / JCM 31522 / CIP 106686 / LMG 19005 / NCIMB 14063 / MR-1</strain>
    </source>
</reference>